<reference key="1">
    <citation type="journal article" date="2002" name="Nat. Biotechnol.">
        <title>Genome sequence of the dissimilatory metal ion-reducing bacterium Shewanella oneidensis.</title>
        <authorList>
            <person name="Heidelberg J.F."/>
            <person name="Paulsen I.T."/>
            <person name="Nelson K.E."/>
            <person name="Gaidos E.J."/>
            <person name="Nelson W.C."/>
            <person name="Read T.D."/>
            <person name="Eisen J.A."/>
            <person name="Seshadri R."/>
            <person name="Ward N.L."/>
            <person name="Methe B.A."/>
            <person name="Clayton R.A."/>
            <person name="Meyer T."/>
            <person name="Tsapin A."/>
            <person name="Scott J."/>
            <person name="Beanan M.J."/>
            <person name="Brinkac L.M."/>
            <person name="Daugherty S.C."/>
            <person name="DeBoy R.T."/>
            <person name="Dodson R.J."/>
            <person name="Durkin A.S."/>
            <person name="Haft D.H."/>
            <person name="Kolonay J.F."/>
            <person name="Madupu R."/>
            <person name="Peterson J.D."/>
            <person name="Umayam L.A."/>
            <person name="White O."/>
            <person name="Wolf A.M."/>
            <person name="Vamathevan J.J."/>
            <person name="Weidman J.F."/>
            <person name="Impraim M."/>
            <person name="Lee K."/>
            <person name="Berry K.J."/>
            <person name="Lee C."/>
            <person name="Mueller J."/>
            <person name="Khouri H.M."/>
            <person name="Gill J."/>
            <person name="Utterback T.R."/>
            <person name="McDonald L.A."/>
            <person name="Feldblyum T.V."/>
            <person name="Smith H.O."/>
            <person name="Venter J.C."/>
            <person name="Nealson K.H."/>
            <person name="Fraser C.M."/>
        </authorList>
    </citation>
    <scope>NUCLEOTIDE SEQUENCE [LARGE SCALE GENOMIC DNA]</scope>
    <source>
        <strain>ATCC 700550 / JCM 31522 / CIP 106686 / LMG 19005 / NCIMB 14063 / MR-1</strain>
    </source>
</reference>
<comment type="function">
    <text evidence="1">Catalyzes the NAD-dependent reduction of succinylglutamate semialdehyde into succinylglutamate.</text>
</comment>
<comment type="catalytic activity">
    <reaction evidence="1">
        <text>N-succinyl-L-glutamate 5-semialdehyde + NAD(+) + H2O = N-succinyl-L-glutamate + NADH + 2 H(+)</text>
        <dbReference type="Rhea" id="RHEA:10812"/>
        <dbReference type="ChEBI" id="CHEBI:15377"/>
        <dbReference type="ChEBI" id="CHEBI:15378"/>
        <dbReference type="ChEBI" id="CHEBI:57540"/>
        <dbReference type="ChEBI" id="CHEBI:57945"/>
        <dbReference type="ChEBI" id="CHEBI:58520"/>
        <dbReference type="ChEBI" id="CHEBI:58763"/>
        <dbReference type="EC" id="1.2.1.71"/>
    </reaction>
</comment>
<comment type="pathway">
    <text evidence="1">Amino-acid degradation; L-arginine degradation via AST pathway; L-glutamate and succinate from L-arginine: step 4/5.</text>
</comment>
<comment type="similarity">
    <text evidence="1">Belongs to the aldehyde dehydrogenase family. AstD subfamily.</text>
</comment>
<proteinExistence type="inferred from homology"/>
<evidence type="ECO:0000255" key="1">
    <source>
        <dbReference type="HAMAP-Rule" id="MF_01174"/>
    </source>
</evidence>
<evidence type="ECO:0000256" key="2">
    <source>
        <dbReference type="SAM" id="MobiDB-lite"/>
    </source>
</evidence>
<accession>Q8EJ54</accession>
<keyword id="KW-0056">Arginine metabolism</keyword>
<keyword id="KW-0520">NAD</keyword>
<keyword id="KW-0560">Oxidoreductase</keyword>
<keyword id="KW-1185">Reference proteome</keyword>
<sequence length="487" mass="51611">MTHFIKGQWHTGKGHDVASSNPANGEIIWRGQTATAEQVNAAVDAAREAQFDWFILGFDARLKIVEAYRSQLEANKAELAETIAQETGKPQWETATEVAAMIGKIGLSASAYNKRTGTETNDTPAGRAVLRHKPHGVVAVFGPYNFPGHLPNGHIVPALLAGNSVVFKPSELTPKVAELMVTLWEKSGLPAGVLNLVQGEVDTGKALASHPQLDGLFFTGSSRTGHLLHQQYAGHPGKILALEMGGNNPLIIKGVADIKAAVHDILQSAYISSGQRCTCARRLYVEQGEQGDALVAKLVEAVKQIKVGPWNAQPQPFMGSMISEAAAKGMVAAQANLLSLGGVPLVELMHLQAGTGLVSPGLIDVTAVSELPDEEYFGPLLQLVRYSDFDQAIKLANQTRYGLSAGILADSREDYEYFLARIRAGIVNWNKQITGASGAAPFGGVGASGNHRASAFYAADYCAYPVASVEADAVSLPATLSPGLTLS</sequence>
<name>ASTD_SHEON</name>
<organism>
    <name type="scientific">Shewanella oneidensis (strain ATCC 700550 / JCM 31522 / CIP 106686 / LMG 19005 / NCIMB 14063 / MR-1)</name>
    <dbReference type="NCBI Taxonomy" id="211586"/>
    <lineage>
        <taxon>Bacteria</taxon>
        <taxon>Pseudomonadati</taxon>
        <taxon>Pseudomonadota</taxon>
        <taxon>Gammaproteobacteria</taxon>
        <taxon>Alteromonadales</taxon>
        <taxon>Shewanellaceae</taxon>
        <taxon>Shewanella</taxon>
    </lineage>
</organism>
<feature type="chain" id="PRO_0000262426" description="N-succinylglutamate 5-semialdehyde dehydrogenase">
    <location>
        <begin position="1"/>
        <end position="487"/>
    </location>
</feature>
<feature type="region of interest" description="Disordered" evidence="2">
    <location>
        <begin position="1"/>
        <end position="23"/>
    </location>
</feature>
<feature type="active site" evidence="1">
    <location>
        <position position="243"/>
    </location>
</feature>
<feature type="active site" evidence="1">
    <location>
        <position position="277"/>
    </location>
</feature>
<feature type="binding site" evidence="1">
    <location>
        <begin position="220"/>
        <end position="225"/>
    </location>
    <ligand>
        <name>NAD(+)</name>
        <dbReference type="ChEBI" id="CHEBI:57540"/>
    </ligand>
</feature>
<dbReference type="EC" id="1.2.1.71" evidence="1"/>
<dbReference type="EMBL" id="AE014299">
    <property type="protein sequence ID" value="AAN53697.1"/>
    <property type="molecule type" value="Genomic_DNA"/>
</dbReference>
<dbReference type="RefSeq" id="NP_716252.1">
    <property type="nucleotide sequence ID" value="NC_004347.2"/>
</dbReference>
<dbReference type="RefSeq" id="WP_011070949.1">
    <property type="nucleotide sequence ID" value="NC_004347.2"/>
</dbReference>
<dbReference type="SMR" id="Q8EJ54"/>
<dbReference type="STRING" id="211586.SO_0619"/>
<dbReference type="PaxDb" id="211586-SO_0619"/>
<dbReference type="KEGG" id="son:SO_0619"/>
<dbReference type="PATRIC" id="fig|211586.12.peg.597"/>
<dbReference type="eggNOG" id="COG1012">
    <property type="taxonomic scope" value="Bacteria"/>
</dbReference>
<dbReference type="HOGENOM" id="CLU_005391_1_0_6"/>
<dbReference type="OrthoDB" id="9812625at2"/>
<dbReference type="PhylomeDB" id="Q8EJ54"/>
<dbReference type="BioCyc" id="SONE211586:G1GMP-588-MONOMER"/>
<dbReference type="UniPathway" id="UPA00185">
    <property type="reaction ID" value="UER00282"/>
</dbReference>
<dbReference type="Proteomes" id="UP000008186">
    <property type="component" value="Chromosome"/>
</dbReference>
<dbReference type="GO" id="GO:0043824">
    <property type="term" value="F:succinylglutamate-semialdehyde dehydrogenase activity"/>
    <property type="evidence" value="ECO:0007669"/>
    <property type="project" value="UniProtKB-EC"/>
</dbReference>
<dbReference type="GO" id="GO:0019544">
    <property type="term" value="P:arginine catabolic process to glutamate"/>
    <property type="evidence" value="ECO:0007669"/>
    <property type="project" value="UniProtKB-UniRule"/>
</dbReference>
<dbReference type="GO" id="GO:0019545">
    <property type="term" value="P:arginine catabolic process to succinate"/>
    <property type="evidence" value="ECO:0007669"/>
    <property type="project" value="UniProtKB-UniRule"/>
</dbReference>
<dbReference type="CDD" id="cd07095">
    <property type="entry name" value="ALDH_SGSD_AstD"/>
    <property type="match status" value="1"/>
</dbReference>
<dbReference type="FunFam" id="3.40.309.10:FF:000013">
    <property type="entry name" value="N-succinylglutamate 5-semialdehyde dehydrogenase"/>
    <property type="match status" value="1"/>
</dbReference>
<dbReference type="FunFam" id="3.40.605.10:FF:000010">
    <property type="entry name" value="N-succinylglutamate 5-semialdehyde dehydrogenase"/>
    <property type="match status" value="1"/>
</dbReference>
<dbReference type="Gene3D" id="3.40.605.10">
    <property type="entry name" value="Aldehyde Dehydrogenase, Chain A, domain 1"/>
    <property type="match status" value="1"/>
</dbReference>
<dbReference type="Gene3D" id="3.40.309.10">
    <property type="entry name" value="Aldehyde Dehydrogenase, Chain A, domain 2"/>
    <property type="match status" value="1"/>
</dbReference>
<dbReference type="HAMAP" id="MF_01174">
    <property type="entry name" value="Aldedh_AstD"/>
    <property type="match status" value="1"/>
</dbReference>
<dbReference type="InterPro" id="IPR016161">
    <property type="entry name" value="Ald_DH/histidinol_DH"/>
</dbReference>
<dbReference type="InterPro" id="IPR016163">
    <property type="entry name" value="Ald_DH_C"/>
</dbReference>
<dbReference type="InterPro" id="IPR016160">
    <property type="entry name" value="Ald_DH_CS_CYS"/>
</dbReference>
<dbReference type="InterPro" id="IPR029510">
    <property type="entry name" value="Ald_DH_CS_GLU"/>
</dbReference>
<dbReference type="InterPro" id="IPR016162">
    <property type="entry name" value="Ald_DH_N"/>
</dbReference>
<dbReference type="InterPro" id="IPR015590">
    <property type="entry name" value="Aldehyde_DH_dom"/>
</dbReference>
<dbReference type="InterPro" id="IPR017649">
    <property type="entry name" value="SuccinylGlu_semiald_DH_AstD"/>
</dbReference>
<dbReference type="NCBIfam" id="TIGR03240">
    <property type="entry name" value="arg_catab_astD"/>
    <property type="match status" value="1"/>
</dbReference>
<dbReference type="NCBIfam" id="NF006992">
    <property type="entry name" value="PRK09457.1"/>
    <property type="match status" value="1"/>
</dbReference>
<dbReference type="PANTHER" id="PTHR11699">
    <property type="entry name" value="ALDEHYDE DEHYDROGENASE-RELATED"/>
    <property type="match status" value="1"/>
</dbReference>
<dbReference type="Pfam" id="PF00171">
    <property type="entry name" value="Aldedh"/>
    <property type="match status" value="1"/>
</dbReference>
<dbReference type="SUPFAM" id="SSF53720">
    <property type="entry name" value="ALDH-like"/>
    <property type="match status" value="1"/>
</dbReference>
<dbReference type="PROSITE" id="PS00070">
    <property type="entry name" value="ALDEHYDE_DEHYDR_CYS"/>
    <property type="match status" value="1"/>
</dbReference>
<dbReference type="PROSITE" id="PS00687">
    <property type="entry name" value="ALDEHYDE_DEHYDR_GLU"/>
    <property type="match status" value="1"/>
</dbReference>
<gene>
    <name evidence="1" type="primary">astD</name>
    <name type="ordered locus">SO_0619</name>
</gene>
<protein>
    <recommendedName>
        <fullName evidence="1">N-succinylglutamate 5-semialdehyde dehydrogenase</fullName>
        <ecNumber evidence="1">1.2.1.71</ecNumber>
    </recommendedName>
    <alternativeName>
        <fullName evidence="1">Succinylglutamic semialdehyde dehydrogenase</fullName>
        <shortName evidence="1">SGSD</shortName>
    </alternativeName>
</protein>